<gene>
    <name evidence="1" type="primary">nuoI</name>
    <name type="ordered locus">JJD26997_1922</name>
</gene>
<reference key="1">
    <citation type="submission" date="2007-07" db="EMBL/GenBank/DDBJ databases">
        <title>Complete genome sequence of Campylobacter jejuni subsp doylei 269.97 isolated from human blood.</title>
        <authorList>
            <person name="Fouts D.E."/>
            <person name="Mongodin E.F."/>
            <person name="Puiu D."/>
            <person name="Sebastian Y."/>
            <person name="Miller W.G."/>
            <person name="Mandrell R.E."/>
            <person name="Lastovica A.J."/>
            <person name="Nelson K.E."/>
        </authorList>
    </citation>
    <scope>NUCLEOTIDE SEQUENCE [LARGE SCALE GENOMIC DNA]</scope>
    <source>
        <strain>ATCC BAA-1458 / RM4099 / 269.97</strain>
    </source>
</reference>
<comment type="function">
    <text evidence="1">NDH-1 shuttles electrons from NADH, via FMN and iron-sulfur (Fe-S) centers, to quinones in the respiratory chain. The immediate electron acceptor for the enzyme in this species is believed to be ubiquinone. Couples the redox reaction to proton translocation (for every two electrons transferred, four hydrogen ions are translocated across the cytoplasmic membrane), and thus conserves the redox energy in a proton gradient.</text>
</comment>
<comment type="catalytic activity">
    <reaction evidence="1">
        <text>a quinone + NADH + 5 H(+)(in) = a quinol + NAD(+) + 4 H(+)(out)</text>
        <dbReference type="Rhea" id="RHEA:57888"/>
        <dbReference type="ChEBI" id="CHEBI:15378"/>
        <dbReference type="ChEBI" id="CHEBI:24646"/>
        <dbReference type="ChEBI" id="CHEBI:57540"/>
        <dbReference type="ChEBI" id="CHEBI:57945"/>
        <dbReference type="ChEBI" id="CHEBI:132124"/>
    </reaction>
</comment>
<comment type="cofactor">
    <cofactor evidence="1">
        <name>[4Fe-4S] cluster</name>
        <dbReference type="ChEBI" id="CHEBI:49883"/>
    </cofactor>
    <text evidence="1">Binds 2 [4Fe-4S] clusters per subunit.</text>
</comment>
<comment type="subunit">
    <text evidence="1">NDH-1 is composed of 14 different subunits. Subunits NuoA, H, J, K, L, M, N constitute the membrane sector of the complex.</text>
</comment>
<comment type="subcellular location">
    <subcellularLocation>
        <location evidence="1">Cell inner membrane</location>
        <topology evidence="1">Peripheral membrane protein</topology>
    </subcellularLocation>
</comment>
<comment type="similarity">
    <text evidence="1">Belongs to the complex I 23 kDa subunit family.</text>
</comment>
<proteinExistence type="inferred from homology"/>
<sequence>MKNYYLVDEKRKTPVSTWEKISQALRRSVKLELFVGLFVMMRELLKRNNSATIKYPFEKVKLDNRYRAVHRLMRFIESENERCIGCGLCEKICISNCIRMETSLDENGRKKVGNYSINLGRCIYCGFCAEVCPELAIVHGIEYENAAEQRSYFGYKQDFLTPIDKLKNQVEFEGAGSLRKDANLWVKKTPNYYDVMQERVLENQNTKEQGENK</sequence>
<organism>
    <name type="scientific">Campylobacter jejuni subsp. doylei (strain ATCC BAA-1458 / RM4099 / 269.97)</name>
    <dbReference type="NCBI Taxonomy" id="360109"/>
    <lineage>
        <taxon>Bacteria</taxon>
        <taxon>Pseudomonadati</taxon>
        <taxon>Campylobacterota</taxon>
        <taxon>Epsilonproteobacteria</taxon>
        <taxon>Campylobacterales</taxon>
        <taxon>Campylobacteraceae</taxon>
        <taxon>Campylobacter</taxon>
    </lineage>
</organism>
<accession>A7H5S3</accession>
<evidence type="ECO:0000255" key="1">
    <source>
        <dbReference type="HAMAP-Rule" id="MF_01351"/>
    </source>
</evidence>
<name>NUOI_CAMJD</name>
<dbReference type="EC" id="7.1.1.-" evidence="1"/>
<dbReference type="EMBL" id="CP000768">
    <property type="protein sequence ID" value="ABS43222.1"/>
    <property type="molecule type" value="Genomic_DNA"/>
</dbReference>
<dbReference type="SMR" id="A7H5S3"/>
<dbReference type="KEGG" id="cjd:JJD26997_1922"/>
<dbReference type="HOGENOM" id="CLU_067218_4_1_7"/>
<dbReference type="Proteomes" id="UP000002302">
    <property type="component" value="Chromosome"/>
</dbReference>
<dbReference type="GO" id="GO:0005886">
    <property type="term" value="C:plasma membrane"/>
    <property type="evidence" value="ECO:0007669"/>
    <property type="project" value="UniProtKB-SubCell"/>
</dbReference>
<dbReference type="GO" id="GO:0051539">
    <property type="term" value="F:4 iron, 4 sulfur cluster binding"/>
    <property type="evidence" value="ECO:0007669"/>
    <property type="project" value="UniProtKB-KW"/>
</dbReference>
<dbReference type="GO" id="GO:0005506">
    <property type="term" value="F:iron ion binding"/>
    <property type="evidence" value="ECO:0007669"/>
    <property type="project" value="UniProtKB-UniRule"/>
</dbReference>
<dbReference type="GO" id="GO:0050136">
    <property type="term" value="F:NADH:ubiquinone reductase (non-electrogenic) activity"/>
    <property type="evidence" value="ECO:0007669"/>
    <property type="project" value="UniProtKB-UniRule"/>
</dbReference>
<dbReference type="GO" id="GO:0048038">
    <property type="term" value="F:quinone binding"/>
    <property type="evidence" value="ECO:0007669"/>
    <property type="project" value="UniProtKB-KW"/>
</dbReference>
<dbReference type="GO" id="GO:0009060">
    <property type="term" value="P:aerobic respiration"/>
    <property type="evidence" value="ECO:0007669"/>
    <property type="project" value="TreeGrafter"/>
</dbReference>
<dbReference type="FunFam" id="3.30.70.3270:FF:000011">
    <property type="entry name" value="NADH-quinone oxidoreductase subunit I"/>
    <property type="match status" value="1"/>
</dbReference>
<dbReference type="Gene3D" id="3.30.70.3270">
    <property type="match status" value="1"/>
</dbReference>
<dbReference type="HAMAP" id="MF_01351">
    <property type="entry name" value="NDH1_NuoI"/>
    <property type="match status" value="1"/>
</dbReference>
<dbReference type="InterPro" id="IPR017896">
    <property type="entry name" value="4Fe4S_Fe-S-bd"/>
</dbReference>
<dbReference type="InterPro" id="IPR017900">
    <property type="entry name" value="4Fe4S_Fe_S_CS"/>
</dbReference>
<dbReference type="InterPro" id="IPR010226">
    <property type="entry name" value="NADH_quinone_OxRdtase_chainI"/>
</dbReference>
<dbReference type="NCBIfam" id="TIGR01971">
    <property type="entry name" value="NuoI"/>
    <property type="match status" value="1"/>
</dbReference>
<dbReference type="NCBIfam" id="NF004542">
    <property type="entry name" value="PRK05888.2-3"/>
    <property type="match status" value="1"/>
</dbReference>
<dbReference type="PANTHER" id="PTHR10849:SF20">
    <property type="entry name" value="NADH DEHYDROGENASE [UBIQUINONE] IRON-SULFUR PROTEIN 8, MITOCHONDRIAL"/>
    <property type="match status" value="1"/>
</dbReference>
<dbReference type="PANTHER" id="PTHR10849">
    <property type="entry name" value="NADH DEHYDROGENASE UBIQUINONE IRON-SULFUR PROTEIN 8, MITOCHONDRIAL"/>
    <property type="match status" value="1"/>
</dbReference>
<dbReference type="Pfam" id="PF12838">
    <property type="entry name" value="Fer4_7"/>
    <property type="match status" value="1"/>
</dbReference>
<dbReference type="SUPFAM" id="SSF54862">
    <property type="entry name" value="4Fe-4S ferredoxins"/>
    <property type="match status" value="1"/>
</dbReference>
<dbReference type="PROSITE" id="PS00198">
    <property type="entry name" value="4FE4S_FER_1"/>
    <property type="match status" value="1"/>
</dbReference>
<dbReference type="PROSITE" id="PS51379">
    <property type="entry name" value="4FE4S_FER_2"/>
    <property type="match status" value="2"/>
</dbReference>
<keyword id="KW-0004">4Fe-4S</keyword>
<keyword id="KW-0997">Cell inner membrane</keyword>
<keyword id="KW-1003">Cell membrane</keyword>
<keyword id="KW-0408">Iron</keyword>
<keyword id="KW-0411">Iron-sulfur</keyword>
<keyword id="KW-0472">Membrane</keyword>
<keyword id="KW-0479">Metal-binding</keyword>
<keyword id="KW-0520">NAD</keyword>
<keyword id="KW-0874">Quinone</keyword>
<keyword id="KW-0677">Repeat</keyword>
<keyword id="KW-1278">Translocase</keyword>
<keyword id="KW-0830">Ubiquinone</keyword>
<feature type="chain" id="PRO_1000067767" description="NADH-quinone oxidoreductase subunit I">
    <location>
        <begin position="1"/>
        <end position="213"/>
    </location>
</feature>
<feature type="domain" description="4Fe-4S ferredoxin-type 1" evidence="1">
    <location>
        <begin position="74"/>
        <end position="103"/>
    </location>
</feature>
<feature type="domain" description="4Fe-4S ferredoxin-type 2" evidence="1">
    <location>
        <begin position="113"/>
        <end position="142"/>
    </location>
</feature>
<feature type="binding site" evidence="1">
    <location>
        <position position="83"/>
    </location>
    <ligand>
        <name>[4Fe-4S] cluster</name>
        <dbReference type="ChEBI" id="CHEBI:49883"/>
        <label>1</label>
    </ligand>
</feature>
<feature type="binding site" evidence="1">
    <location>
        <position position="86"/>
    </location>
    <ligand>
        <name>[4Fe-4S] cluster</name>
        <dbReference type="ChEBI" id="CHEBI:49883"/>
        <label>1</label>
    </ligand>
</feature>
<feature type="binding site" evidence="1">
    <location>
        <position position="89"/>
    </location>
    <ligand>
        <name>[4Fe-4S] cluster</name>
        <dbReference type="ChEBI" id="CHEBI:49883"/>
        <label>1</label>
    </ligand>
</feature>
<feature type="binding site" evidence="1">
    <location>
        <position position="93"/>
    </location>
    <ligand>
        <name>[4Fe-4S] cluster</name>
        <dbReference type="ChEBI" id="CHEBI:49883"/>
        <label>2</label>
    </ligand>
</feature>
<feature type="binding site" evidence="1">
    <location>
        <position position="122"/>
    </location>
    <ligand>
        <name>[4Fe-4S] cluster</name>
        <dbReference type="ChEBI" id="CHEBI:49883"/>
        <label>2</label>
    </ligand>
</feature>
<feature type="binding site" evidence="1">
    <location>
        <position position="125"/>
    </location>
    <ligand>
        <name>[4Fe-4S] cluster</name>
        <dbReference type="ChEBI" id="CHEBI:49883"/>
        <label>2</label>
    </ligand>
</feature>
<feature type="binding site" evidence="1">
    <location>
        <position position="128"/>
    </location>
    <ligand>
        <name>[4Fe-4S] cluster</name>
        <dbReference type="ChEBI" id="CHEBI:49883"/>
        <label>2</label>
    </ligand>
</feature>
<feature type="binding site" evidence="1">
    <location>
        <position position="132"/>
    </location>
    <ligand>
        <name>[4Fe-4S] cluster</name>
        <dbReference type="ChEBI" id="CHEBI:49883"/>
        <label>1</label>
    </ligand>
</feature>
<protein>
    <recommendedName>
        <fullName evidence="1">NADH-quinone oxidoreductase subunit I</fullName>
        <ecNumber evidence="1">7.1.1.-</ecNumber>
    </recommendedName>
    <alternativeName>
        <fullName evidence="1">NADH dehydrogenase I subunit I</fullName>
    </alternativeName>
    <alternativeName>
        <fullName evidence="1">NDH-1 subunit I</fullName>
    </alternativeName>
</protein>